<accession>Q98MC6</accession>
<gene>
    <name evidence="1" type="primary">lpxA</name>
    <name type="ordered locus">mll0633</name>
</gene>
<protein>
    <recommendedName>
        <fullName evidence="1">Acyl-[acyl-carrier-protein]--UDP-N-acetylglucosamine O-acyltransferase</fullName>
        <shortName evidence="1">UDP-N-acetylglucosamine acyltransferase</shortName>
        <ecNumber evidence="1">2.3.1.129</ecNumber>
    </recommendedName>
</protein>
<dbReference type="EC" id="2.3.1.129" evidence="1"/>
<dbReference type="EMBL" id="BA000012">
    <property type="protein sequence ID" value="BAB48187.1"/>
    <property type="molecule type" value="Genomic_DNA"/>
</dbReference>
<dbReference type="SMR" id="Q98MC6"/>
<dbReference type="KEGG" id="mlo:mll0633"/>
<dbReference type="eggNOG" id="COG1043">
    <property type="taxonomic scope" value="Bacteria"/>
</dbReference>
<dbReference type="HOGENOM" id="CLU_061249_0_0_5"/>
<dbReference type="UniPathway" id="UPA00359">
    <property type="reaction ID" value="UER00477"/>
</dbReference>
<dbReference type="Proteomes" id="UP000000552">
    <property type="component" value="Chromosome"/>
</dbReference>
<dbReference type="GO" id="GO:0005737">
    <property type="term" value="C:cytoplasm"/>
    <property type="evidence" value="ECO:0007669"/>
    <property type="project" value="UniProtKB-SubCell"/>
</dbReference>
<dbReference type="GO" id="GO:0016020">
    <property type="term" value="C:membrane"/>
    <property type="evidence" value="ECO:0007669"/>
    <property type="project" value="GOC"/>
</dbReference>
<dbReference type="GO" id="GO:0008780">
    <property type="term" value="F:acyl-[acyl-carrier-protein]-UDP-N-acetylglucosamine O-acyltransferase activity"/>
    <property type="evidence" value="ECO:0007669"/>
    <property type="project" value="UniProtKB-UniRule"/>
</dbReference>
<dbReference type="GO" id="GO:0009245">
    <property type="term" value="P:lipid A biosynthetic process"/>
    <property type="evidence" value="ECO:0007669"/>
    <property type="project" value="UniProtKB-UniRule"/>
</dbReference>
<dbReference type="CDD" id="cd03351">
    <property type="entry name" value="LbH_UDP-GlcNAc_AT"/>
    <property type="match status" value="1"/>
</dbReference>
<dbReference type="Gene3D" id="2.160.10.10">
    <property type="entry name" value="Hexapeptide repeat proteins"/>
    <property type="match status" value="1"/>
</dbReference>
<dbReference type="Gene3D" id="1.20.1180.10">
    <property type="entry name" value="Udp N-acetylglucosamine O-acyltransferase, C-terminal domain"/>
    <property type="match status" value="1"/>
</dbReference>
<dbReference type="HAMAP" id="MF_00387">
    <property type="entry name" value="LpxA"/>
    <property type="match status" value="1"/>
</dbReference>
<dbReference type="InterPro" id="IPR029098">
    <property type="entry name" value="Acetyltransf_C"/>
</dbReference>
<dbReference type="InterPro" id="IPR037157">
    <property type="entry name" value="Acetyltransf_C_sf"/>
</dbReference>
<dbReference type="InterPro" id="IPR001451">
    <property type="entry name" value="Hexapep"/>
</dbReference>
<dbReference type="InterPro" id="IPR010137">
    <property type="entry name" value="Lipid_A_LpxA"/>
</dbReference>
<dbReference type="InterPro" id="IPR011004">
    <property type="entry name" value="Trimer_LpxA-like_sf"/>
</dbReference>
<dbReference type="NCBIfam" id="TIGR01852">
    <property type="entry name" value="lipid_A_lpxA"/>
    <property type="match status" value="1"/>
</dbReference>
<dbReference type="NCBIfam" id="NF003657">
    <property type="entry name" value="PRK05289.1"/>
    <property type="match status" value="1"/>
</dbReference>
<dbReference type="PANTHER" id="PTHR43480">
    <property type="entry name" value="ACYL-[ACYL-CARRIER-PROTEIN]--UDP-N-ACETYLGLUCOSAMINE O-ACYLTRANSFERASE"/>
    <property type="match status" value="1"/>
</dbReference>
<dbReference type="PANTHER" id="PTHR43480:SF1">
    <property type="entry name" value="ACYL-[ACYL-CARRIER-PROTEIN]--UDP-N-ACETYLGLUCOSAMINE O-ACYLTRANSFERASE, MITOCHONDRIAL-RELATED"/>
    <property type="match status" value="1"/>
</dbReference>
<dbReference type="Pfam" id="PF13720">
    <property type="entry name" value="Acetyltransf_11"/>
    <property type="match status" value="1"/>
</dbReference>
<dbReference type="Pfam" id="PF00132">
    <property type="entry name" value="Hexapep"/>
    <property type="match status" value="1"/>
</dbReference>
<dbReference type="PIRSF" id="PIRSF000456">
    <property type="entry name" value="UDP-GlcNAc_acltr"/>
    <property type="match status" value="1"/>
</dbReference>
<dbReference type="SUPFAM" id="SSF51161">
    <property type="entry name" value="Trimeric LpxA-like enzymes"/>
    <property type="match status" value="1"/>
</dbReference>
<comment type="function">
    <text evidence="1">Involved in the biosynthesis of lipid A, a phosphorylated glycolipid that anchors the lipopolysaccharide to the outer membrane of the cell.</text>
</comment>
<comment type="catalytic activity">
    <reaction evidence="1">
        <text>a (3R)-hydroxyacyl-[ACP] + UDP-N-acetyl-alpha-D-glucosamine = a UDP-3-O-[(3R)-3-hydroxyacyl]-N-acetyl-alpha-D-glucosamine + holo-[ACP]</text>
        <dbReference type="Rhea" id="RHEA:67812"/>
        <dbReference type="Rhea" id="RHEA-COMP:9685"/>
        <dbReference type="Rhea" id="RHEA-COMP:9945"/>
        <dbReference type="ChEBI" id="CHEBI:57705"/>
        <dbReference type="ChEBI" id="CHEBI:64479"/>
        <dbReference type="ChEBI" id="CHEBI:78827"/>
        <dbReference type="ChEBI" id="CHEBI:173225"/>
        <dbReference type="EC" id="2.3.1.129"/>
    </reaction>
</comment>
<comment type="pathway">
    <text evidence="1">Glycolipid biosynthesis; lipid IV(A) biosynthesis; lipid IV(A) from (3R)-3-hydroxytetradecanoyl-[acyl-carrier-protein] and UDP-N-acetyl-alpha-D-glucosamine: step 1/6.</text>
</comment>
<comment type="subunit">
    <text evidence="1">Homotrimer.</text>
</comment>
<comment type="subcellular location">
    <subcellularLocation>
        <location evidence="1">Cytoplasm</location>
    </subcellularLocation>
</comment>
<comment type="similarity">
    <text evidence="1">Belongs to the transferase hexapeptide repeat family. LpxA subfamily.</text>
</comment>
<organism>
    <name type="scientific">Mesorhizobium japonicum (strain LMG 29417 / CECT 9101 / MAFF 303099)</name>
    <name type="common">Mesorhizobium loti (strain MAFF 303099)</name>
    <dbReference type="NCBI Taxonomy" id="266835"/>
    <lineage>
        <taxon>Bacteria</taxon>
        <taxon>Pseudomonadati</taxon>
        <taxon>Pseudomonadota</taxon>
        <taxon>Alphaproteobacteria</taxon>
        <taxon>Hyphomicrobiales</taxon>
        <taxon>Phyllobacteriaceae</taxon>
        <taxon>Mesorhizobium</taxon>
    </lineage>
</organism>
<feature type="chain" id="PRO_0000188062" description="Acyl-[acyl-carrier-protein]--UDP-N-acetylglucosamine O-acyltransferase">
    <location>
        <begin position="1"/>
        <end position="279"/>
    </location>
</feature>
<evidence type="ECO:0000255" key="1">
    <source>
        <dbReference type="HAMAP-Rule" id="MF_00387"/>
    </source>
</evidence>
<proteinExistence type="inferred from homology"/>
<sequence length="279" mass="29277">MLMKIKTSIHPSSVVEEGAQIGEGVRIGPFCHISADAVIGDGVELVSHVSVMGATTIGASTKVYPMATLGAPPQNTKHKGGRTTLVIGANCTIREGVTMHVGTDTSRGETTVGDNGNFLAYAHIAHDCVVGKNATFANGATLGGHCEIGDNVYIGGLSAVHQFVRVGDNAFLGGCSAFVGDVIPYAIAVGNRASLRGLNIIGLKRAGLPRSEIYLLRKAYRTIFDRSRTVGENIEFAKAEFASSPTAMKIIDFISSRGKRHYAVPSLKGGDGDDTDDED</sequence>
<name>LPXA_RHILO</name>
<reference key="1">
    <citation type="journal article" date="2000" name="DNA Res.">
        <title>Complete genome structure of the nitrogen-fixing symbiotic bacterium Mesorhizobium loti.</title>
        <authorList>
            <person name="Kaneko T."/>
            <person name="Nakamura Y."/>
            <person name="Sato S."/>
            <person name="Asamizu E."/>
            <person name="Kato T."/>
            <person name="Sasamoto S."/>
            <person name="Watanabe A."/>
            <person name="Idesawa K."/>
            <person name="Ishikawa A."/>
            <person name="Kawashima K."/>
            <person name="Kimura T."/>
            <person name="Kishida Y."/>
            <person name="Kiyokawa C."/>
            <person name="Kohara M."/>
            <person name="Matsumoto M."/>
            <person name="Matsuno A."/>
            <person name="Mochizuki Y."/>
            <person name="Nakayama S."/>
            <person name="Nakazaki N."/>
            <person name="Shimpo S."/>
            <person name="Sugimoto M."/>
            <person name="Takeuchi C."/>
            <person name="Yamada M."/>
            <person name="Tabata S."/>
        </authorList>
    </citation>
    <scope>NUCLEOTIDE SEQUENCE [LARGE SCALE GENOMIC DNA]</scope>
    <source>
        <strain>LMG 29417 / CECT 9101 / MAFF 303099</strain>
    </source>
</reference>
<keyword id="KW-0012">Acyltransferase</keyword>
<keyword id="KW-0963">Cytoplasm</keyword>
<keyword id="KW-0441">Lipid A biosynthesis</keyword>
<keyword id="KW-0444">Lipid biosynthesis</keyword>
<keyword id="KW-0443">Lipid metabolism</keyword>
<keyword id="KW-0677">Repeat</keyword>
<keyword id="KW-0808">Transferase</keyword>